<reference key="1">
    <citation type="journal article" date="1987" name="J. Bacteriol.">
        <title>Nucleotide sequence analysis of Tn4551: use of ermFS operon fusions to detect promoter activity in Bacteroides fragilis.</title>
        <authorList>
            <person name="Smith C.J."/>
        </authorList>
    </citation>
    <scope>NUCLEOTIDE SEQUENCE [GENOMIC DNA]</scope>
</reference>
<feature type="chain" id="PRO_0000211895" description="Transposase for insertion sequence element IS4351">
    <location>
        <begin position="1"/>
        <end position="326"/>
    </location>
</feature>
<feature type="domain" description="Integrase catalytic" evidence="1">
    <location>
        <begin position="156"/>
        <end position="317"/>
    </location>
</feature>
<protein>
    <recommendedName>
        <fullName>Transposase for insertion sequence element IS4351</fullName>
    </recommendedName>
    <alternativeName>
        <fullName>Transposon TN4551</fullName>
    </alternativeName>
</protein>
<name>TRA4_BACFG</name>
<proteinExistence type="inferred from homology"/>
<evidence type="ECO:0000255" key="1">
    <source>
        <dbReference type="PROSITE-ProRule" id="PRU00457"/>
    </source>
</evidence>
<evidence type="ECO:0000305" key="2"/>
<sequence length="326" mass="37994">MSKHITEEQRYAISMMLQIPMSKKAIAEAIGVDKSTVYREIKRNCDARSGSYSMELAQRKADRRKQQKHRKEVLTPAMRKRIIKLLKKGFSPEQIVGRSRLEGIAMVSHETIYRWIWEDKRRGGKLHKYLRRQGRRYAKRGSKNAGRGFIPGRVDIDERPEIVELKERFGDLEIDTIIGKNHKGAILTINDRATSRVWIRKLSGKEAIPVAKIAVWALRKVKNLIHTITADNGKEFAKHEEIAQKLEIKFYFCKPYHSWERGANENTNGLIRQYIPKGKDFSEVTNKQIKWIENKLNNRPRKRLGYLTPNEKFKQIINQNSVAFAS</sequence>
<comment type="function">
    <text evidence="2">Required for the transposition of the insertion element.</text>
</comment>
<comment type="similarity">
    <text evidence="2">Belongs to the transposase IS30 family.</text>
</comment>
<accession>P37247</accession>
<organism>
    <name type="scientific">Bacteroides fragilis</name>
    <dbReference type="NCBI Taxonomy" id="817"/>
    <lineage>
        <taxon>Bacteria</taxon>
        <taxon>Pseudomonadati</taxon>
        <taxon>Bacteroidota</taxon>
        <taxon>Bacteroidia</taxon>
        <taxon>Bacteroidales</taxon>
        <taxon>Bacteroidaceae</taxon>
        <taxon>Bacteroides</taxon>
    </lineage>
</organism>
<dbReference type="EMBL" id="M17808">
    <property type="protein sequence ID" value="AAA27430.1"/>
    <property type="molecule type" value="Genomic_DNA"/>
</dbReference>
<dbReference type="RefSeq" id="WP_005794072.1">
    <property type="nucleotide sequence ID" value="NZ_VOHY01000019.1"/>
</dbReference>
<dbReference type="GeneID" id="93525803"/>
<dbReference type="GO" id="GO:0005829">
    <property type="term" value="C:cytosol"/>
    <property type="evidence" value="ECO:0007669"/>
    <property type="project" value="TreeGrafter"/>
</dbReference>
<dbReference type="GO" id="GO:0003677">
    <property type="term" value="F:DNA binding"/>
    <property type="evidence" value="ECO:0007669"/>
    <property type="project" value="UniProtKB-KW"/>
</dbReference>
<dbReference type="GO" id="GO:0004803">
    <property type="term" value="F:transposase activity"/>
    <property type="evidence" value="ECO:0007669"/>
    <property type="project" value="InterPro"/>
</dbReference>
<dbReference type="GO" id="GO:0015074">
    <property type="term" value="P:DNA integration"/>
    <property type="evidence" value="ECO:0007669"/>
    <property type="project" value="InterPro"/>
</dbReference>
<dbReference type="GO" id="GO:0006313">
    <property type="term" value="P:DNA transposition"/>
    <property type="evidence" value="ECO:0007669"/>
    <property type="project" value="InterPro"/>
</dbReference>
<dbReference type="Gene3D" id="1.10.10.60">
    <property type="entry name" value="Homeodomain-like"/>
    <property type="match status" value="1"/>
</dbReference>
<dbReference type="Gene3D" id="3.30.420.10">
    <property type="entry name" value="Ribonuclease H-like superfamily/Ribonuclease H"/>
    <property type="match status" value="1"/>
</dbReference>
<dbReference type="InterPro" id="IPR009057">
    <property type="entry name" value="Homeodomain-like_sf"/>
</dbReference>
<dbReference type="InterPro" id="IPR001584">
    <property type="entry name" value="Integrase_cat-core"/>
</dbReference>
<dbReference type="InterPro" id="IPR025246">
    <property type="entry name" value="IS30-like_HTH"/>
</dbReference>
<dbReference type="InterPro" id="IPR012337">
    <property type="entry name" value="RNaseH-like_sf"/>
</dbReference>
<dbReference type="InterPro" id="IPR036397">
    <property type="entry name" value="RNaseH_sf"/>
</dbReference>
<dbReference type="InterPro" id="IPR051917">
    <property type="entry name" value="Transposase-Integrase"/>
</dbReference>
<dbReference type="InterPro" id="IPR053392">
    <property type="entry name" value="Transposase_IS30-like"/>
</dbReference>
<dbReference type="InterPro" id="IPR001598">
    <property type="entry name" value="Transposase_IS30_CS"/>
</dbReference>
<dbReference type="NCBIfam" id="NF033563">
    <property type="entry name" value="transpos_IS30"/>
    <property type="match status" value="1"/>
</dbReference>
<dbReference type="PANTHER" id="PTHR10948">
    <property type="entry name" value="TRANSPOSASE"/>
    <property type="match status" value="1"/>
</dbReference>
<dbReference type="PANTHER" id="PTHR10948:SF23">
    <property type="entry name" value="TRANSPOSASE INSI FOR INSERTION SEQUENCE ELEMENT IS30A-RELATED"/>
    <property type="match status" value="1"/>
</dbReference>
<dbReference type="Pfam" id="PF13936">
    <property type="entry name" value="HTH_38"/>
    <property type="match status" value="1"/>
</dbReference>
<dbReference type="SUPFAM" id="SSF46689">
    <property type="entry name" value="Homeodomain-like"/>
    <property type="match status" value="1"/>
</dbReference>
<dbReference type="SUPFAM" id="SSF53098">
    <property type="entry name" value="Ribonuclease H-like"/>
    <property type="match status" value="1"/>
</dbReference>
<dbReference type="PROSITE" id="PS50994">
    <property type="entry name" value="INTEGRASE"/>
    <property type="match status" value="1"/>
</dbReference>
<dbReference type="PROSITE" id="PS01043">
    <property type="entry name" value="TRANSPOSASE_IS30"/>
    <property type="match status" value="1"/>
</dbReference>
<keyword id="KW-0233">DNA recombination</keyword>
<keyword id="KW-0238">DNA-binding</keyword>
<keyword id="KW-0614">Plasmid</keyword>
<keyword id="KW-0814">Transposable element</keyword>
<keyword id="KW-0815">Transposition</keyword>